<reference key="1">
    <citation type="journal article" date="2005" name="Proc. Natl. Acad. Sci. U.S.A.">
        <title>Complete genome sequence of Vibrio fischeri: a symbiotic bacterium with pathogenic congeners.</title>
        <authorList>
            <person name="Ruby E.G."/>
            <person name="Urbanowski M."/>
            <person name="Campbell J."/>
            <person name="Dunn A."/>
            <person name="Faini M."/>
            <person name="Gunsalus R."/>
            <person name="Lostroh P."/>
            <person name="Lupp C."/>
            <person name="McCann J."/>
            <person name="Millikan D."/>
            <person name="Schaefer A."/>
            <person name="Stabb E."/>
            <person name="Stevens A."/>
            <person name="Visick K."/>
            <person name="Whistler C."/>
            <person name="Greenberg E.P."/>
        </authorList>
    </citation>
    <scope>NUCLEOTIDE SEQUENCE [LARGE SCALE GENOMIC DNA]</scope>
    <source>
        <strain>ATCC 700601 / ES114</strain>
    </source>
</reference>
<accession>Q5E2B3</accession>
<protein>
    <recommendedName>
        <fullName evidence="1">Elongation factor P</fullName>
        <shortName evidence="1">EF-P</shortName>
    </recommendedName>
</protein>
<name>EFP_ALIF1</name>
<keyword id="KW-0963">Cytoplasm</keyword>
<keyword id="KW-0251">Elongation factor</keyword>
<keyword id="KW-0379">Hydroxylation</keyword>
<keyword id="KW-0648">Protein biosynthesis</keyword>
<keyword id="KW-1185">Reference proteome</keyword>
<comment type="function">
    <text evidence="1">Involved in peptide bond synthesis. Alleviates ribosome stalling that occurs when 3 or more consecutive Pro residues or the sequence PPG is present in a protein, possibly by augmenting the peptidyl transferase activity of the ribosome. Modification of Lys-34 is required for alleviation.</text>
</comment>
<comment type="pathway">
    <text evidence="1">Protein biosynthesis; polypeptide chain elongation.</text>
</comment>
<comment type="subcellular location">
    <subcellularLocation>
        <location evidence="1">Cytoplasm</location>
    </subcellularLocation>
</comment>
<comment type="PTM">
    <text evidence="1">May be beta-lysylated on the epsilon-amino group of Lys-34 by the combined action of EpmA and EpmB, and then hydroxylated on the C5 position of the same residue by EpmC (if this protein is present). Lysylation is critical for the stimulatory effect of EF-P on peptide-bond formation. The lysylation moiety may extend toward the peptidyltransferase center and stabilize the terminal 3-CCA end of the tRNA. Hydroxylation of the C5 position on Lys-34 may allow additional potential stabilizing hydrogen-bond interactions with the P-tRNA.</text>
</comment>
<comment type="similarity">
    <text evidence="1">Belongs to the elongation factor P family.</text>
</comment>
<sequence length="188" mass="20650">MASVSTNEFKGGLKFMLDNEPCSIIENEYVKPGKGQAFNRVKLRRLLSGKTLEKTFKSGESFELADVVDVELDYLYNDGEFYHFMNSVSFEQIAADVKAVGDTAKWLVENDTCTLTLWNDNPITVTPPNFVELEVTETDPGLKGDTQGTGGKPATLSTGAVVRVPLFIAIGEVVKVDTRTGEYVGRVK</sequence>
<gene>
    <name evidence="1" type="primary">efp</name>
    <name type="ordered locus">VF_2338</name>
</gene>
<proteinExistence type="inferred from homology"/>
<evidence type="ECO:0000255" key="1">
    <source>
        <dbReference type="HAMAP-Rule" id="MF_00141"/>
    </source>
</evidence>
<feature type="chain" id="PRO_0000094365" description="Elongation factor P">
    <location>
        <begin position="1"/>
        <end position="188"/>
    </location>
</feature>
<feature type="modified residue" description="N6-(3,6-diaminohexanoyl)-5-hydroxylysine" evidence="1">
    <location>
        <position position="34"/>
    </location>
</feature>
<organism>
    <name type="scientific">Aliivibrio fischeri (strain ATCC 700601 / ES114)</name>
    <name type="common">Vibrio fischeri</name>
    <dbReference type="NCBI Taxonomy" id="312309"/>
    <lineage>
        <taxon>Bacteria</taxon>
        <taxon>Pseudomonadati</taxon>
        <taxon>Pseudomonadota</taxon>
        <taxon>Gammaproteobacteria</taxon>
        <taxon>Vibrionales</taxon>
        <taxon>Vibrionaceae</taxon>
        <taxon>Aliivibrio</taxon>
    </lineage>
</organism>
<dbReference type="EMBL" id="CP000020">
    <property type="protein sequence ID" value="AAW86833.1"/>
    <property type="molecule type" value="Genomic_DNA"/>
</dbReference>
<dbReference type="RefSeq" id="WP_011262737.1">
    <property type="nucleotide sequence ID" value="NC_006840.2"/>
</dbReference>
<dbReference type="RefSeq" id="YP_205721.1">
    <property type="nucleotide sequence ID" value="NC_006840.2"/>
</dbReference>
<dbReference type="SMR" id="Q5E2B3"/>
<dbReference type="STRING" id="312309.VF_2338"/>
<dbReference type="EnsemblBacteria" id="AAW86833">
    <property type="protein sequence ID" value="AAW86833"/>
    <property type="gene ID" value="VF_2338"/>
</dbReference>
<dbReference type="GeneID" id="54165061"/>
<dbReference type="KEGG" id="vfi:VF_2338"/>
<dbReference type="PATRIC" id="fig|312309.11.peg.2377"/>
<dbReference type="eggNOG" id="COG0231">
    <property type="taxonomic scope" value="Bacteria"/>
</dbReference>
<dbReference type="HOGENOM" id="CLU_074944_0_0_6"/>
<dbReference type="OrthoDB" id="9801844at2"/>
<dbReference type="UniPathway" id="UPA00345"/>
<dbReference type="Proteomes" id="UP000000537">
    <property type="component" value="Chromosome I"/>
</dbReference>
<dbReference type="GO" id="GO:0005737">
    <property type="term" value="C:cytoplasm"/>
    <property type="evidence" value="ECO:0007669"/>
    <property type="project" value="UniProtKB-SubCell"/>
</dbReference>
<dbReference type="GO" id="GO:0003746">
    <property type="term" value="F:translation elongation factor activity"/>
    <property type="evidence" value="ECO:0007669"/>
    <property type="project" value="UniProtKB-UniRule"/>
</dbReference>
<dbReference type="GO" id="GO:0043043">
    <property type="term" value="P:peptide biosynthetic process"/>
    <property type="evidence" value="ECO:0007669"/>
    <property type="project" value="InterPro"/>
</dbReference>
<dbReference type="CDD" id="cd04470">
    <property type="entry name" value="S1_EF-P_repeat_1"/>
    <property type="match status" value="1"/>
</dbReference>
<dbReference type="CDD" id="cd05794">
    <property type="entry name" value="S1_EF-P_repeat_2"/>
    <property type="match status" value="1"/>
</dbReference>
<dbReference type="FunFam" id="2.30.30.30:FF:000003">
    <property type="entry name" value="Elongation factor P"/>
    <property type="match status" value="1"/>
</dbReference>
<dbReference type="FunFam" id="2.40.50.140:FF:000004">
    <property type="entry name" value="Elongation factor P"/>
    <property type="match status" value="1"/>
</dbReference>
<dbReference type="FunFam" id="2.40.50.140:FF:000009">
    <property type="entry name" value="Elongation factor P"/>
    <property type="match status" value="1"/>
</dbReference>
<dbReference type="Gene3D" id="2.30.30.30">
    <property type="match status" value="1"/>
</dbReference>
<dbReference type="Gene3D" id="2.40.50.140">
    <property type="entry name" value="Nucleic acid-binding proteins"/>
    <property type="match status" value="2"/>
</dbReference>
<dbReference type="HAMAP" id="MF_00141">
    <property type="entry name" value="EF_P"/>
    <property type="match status" value="1"/>
</dbReference>
<dbReference type="InterPro" id="IPR015365">
    <property type="entry name" value="Elong-fact-P_C"/>
</dbReference>
<dbReference type="InterPro" id="IPR012340">
    <property type="entry name" value="NA-bd_OB-fold"/>
</dbReference>
<dbReference type="InterPro" id="IPR014722">
    <property type="entry name" value="Rib_uL2_dom2"/>
</dbReference>
<dbReference type="InterPro" id="IPR020599">
    <property type="entry name" value="Transl_elong_fac_P/YeiP"/>
</dbReference>
<dbReference type="InterPro" id="IPR013185">
    <property type="entry name" value="Transl_elong_KOW-like"/>
</dbReference>
<dbReference type="InterPro" id="IPR001059">
    <property type="entry name" value="Transl_elong_P/YeiP_cen"/>
</dbReference>
<dbReference type="InterPro" id="IPR013852">
    <property type="entry name" value="Transl_elong_P/YeiP_CS"/>
</dbReference>
<dbReference type="InterPro" id="IPR011768">
    <property type="entry name" value="Transl_elongation_fac_P"/>
</dbReference>
<dbReference type="InterPro" id="IPR008991">
    <property type="entry name" value="Translation_prot_SH3-like_sf"/>
</dbReference>
<dbReference type="NCBIfam" id="TIGR00038">
    <property type="entry name" value="efp"/>
    <property type="match status" value="1"/>
</dbReference>
<dbReference type="NCBIfam" id="NF001810">
    <property type="entry name" value="PRK00529.1"/>
    <property type="match status" value="1"/>
</dbReference>
<dbReference type="PANTHER" id="PTHR30053">
    <property type="entry name" value="ELONGATION FACTOR P"/>
    <property type="match status" value="1"/>
</dbReference>
<dbReference type="PANTHER" id="PTHR30053:SF12">
    <property type="entry name" value="ELONGATION FACTOR P (EF-P) FAMILY PROTEIN"/>
    <property type="match status" value="1"/>
</dbReference>
<dbReference type="Pfam" id="PF01132">
    <property type="entry name" value="EFP"/>
    <property type="match status" value="1"/>
</dbReference>
<dbReference type="Pfam" id="PF08207">
    <property type="entry name" value="EFP_N"/>
    <property type="match status" value="1"/>
</dbReference>
<dbReference type="Pfam" id="PF09285">
    <property type="entry name" value="Elong-fact-P_C"/>
    <property type="match status" value="1"/>
</dbReference>
<dbReference type="PIRSF" id="PIRSF005901">
    <property type="entry name" value="EF-P"/>
    <property type="match status" value="1"/>
</dbReference>
<dbReference type="SMART" id="SM01185">
    <property type="entry name" value="EFP"/>
    <property type="match status" value="1"/>
</dbReference>
<dbReference type="SMART" id="SM00841">
    <property type="entry name" value="Elong-fact-P_C"/>
    <property type="match status" value="1"/>
</dbReference>
<dbReference type="SUPFAM" id="SSF50249">
    <property type="entry name" value="Nucleic acid-binding proteins"/>
    <property type="match status" value="2"/>
</dbReference>
<dbReference type="SUPFAM" id="SSF50104">
    <property type="entry name" value="Translation proteins SH3-like domain"/>
    <property type="match status" value="1"/>
</dbReference>
<dbReference type="PROSITE" id="PS01275">
    <property type="entry name" value="EFP"/>
    <property type="match status" value="1"/>
</dbReference>